<keyword id="KW-0002">3D-structure</keyword>
<keyword id="KW-1283">Bacterial microcompartment</keyword>
<keyword id="KW-0903">Direct protein sequencing</keyword>
<keyword id="KW-1185">Reference proteome</keyword>
<keyword id="KW-0813">Transport</keyword>
<accession>P0A1C7</accession>
<accession>P37448</accession>
<evidence type="ECO:0000255" key="1">
    <source>
        <dbReference type="PROSITE-ProRule" id="PRU01278"/>
    </source>
</evidence>
<evidence type="ECO:0000269" key="2">
    <source>
    </source>
</evidence>
<evidence type="ECO:0000269" key="3">
    <source>
    </source>
</evidence>
<evidence type="ECO:0000269" key="4">
    <source>
    </source>
</evidence>
<evidence type="ECO:0000269" key="5">
    <source>
    </source>
</evidence>
<evidence type="ECO:0000269" key="6">
    <source>
    </source>
</evidence>
<evidence type="ECO:0000269" key="7">
    <source>
    </source>
</evidence>
<evidence type="ECO:0000269" key="8">
    <source>
    </source>
</evidence>
<evidence type="ECO:0000269" key="9">
    <source>
    </source>
</evidence>
<evidence type="ECO:0000269" key="10">
    <source>
    </source>
</evidence>
<evidence type="ECO:0000269" key="11">
    <source>
    </source>
</evidence>
<evidence type="ECO:0000269" key="12">
    <source>
    </source>
</evidence>
<evidence type="ECO:0000269" key="13">
    <source>
    </source>
</evidence>
<evidence type="ECO:0000269" key="14">
    <source>
    </source>
</evidence>
<evidence type="ECO:0000269" key="15">
    <source>
    </source>
</evidence>
<evidence type="ECO:0000269" key="16">
    <source>
    </source>
</evidence>
<evidence type="ECO:0000269" key="17">
    <source>
    </source>
</evidence>
<evidence type="ECO:0000269" key="18">
    <source ref="22"/>
</evidence>
<evidence type="ECO:0000303" key="19">
    <source>
    </source>
</evidence>
<evidence type="ECO:0000303" key="20">
    <source>
    </source>
</evidence>
<evidence type="ECO:0000303" key="21">
    <source>
    </source>
</evidence>
<evidence type="ECO:0000305" key="22"/>
<evidence type="ECO:0000305" key="23">
    <source>
    </source>
</evidence>
<evidence type="ECO:0000305" key="24">
    <source>
    </source>
</evidence>
<evidence type="ECO:0000305" key="25">
    <source>
    </source>
</evidence>
<evidence type="ECO:0000305" key="26">
    <source>
    </source>
</evidence>
<evidence type="ECO:0000305" key="27">
    <source>
    </source>
</evidence>
<evidence type="ECO:0000305" key="28">
    <source>
    </source>
</evidence>
<evidence type="ECO:0000305" key="29">
    <source>
    </source>
</evidence>
<evidence type="ECO:0000305" key="30">
    <source>
    </source>
</evidence>
<evidence type="ECO:0007744" key="31">
    <source>
        <dbReference type="PDB" id="3NGK"/>
    </source>
</evidence>
<evidence type="ECO:0007744" key="32">
    <source>
        <dbReference type="PDB" id="4PPD"/>
    </source>
</evidence>
<evidence type="ECO:0007744" key="33">
    <source>
        <dbReference type="PDB" id="4QIE"/>
    </source>
</evidence>
<evidence type="ECO:0007744" key="34">
    <source>
        <dbReference type="PDB" id="4QIF"/>
    </source>
</evidence>
<evidence type="ECO:0007744" key="35">
    <source>
        <dbReference type="PDB" id="4QIG"/>
    </source>
</evidence>
<evidence type="ECO:0007744" key="36">
    <source>
        <dbReference type="PDB" id="4RBT"/>
    </source>
</evidence>
<evidence type="ECO:0007744" key="37">
    <source>
        <dbReference type="PDB" id="4RBU"/>
    </source>
</evidence>
<evidence type="ECO:0007744" key="38">
    <source>
        <dbReference type="PDB" id="4RBV"/>
    </source>
</evidence>
<evidence type="ECO:0007829" key="39">
    <source>
        <dbReference type="PDB" id="4QIF"/>
    </source>
</evidence>
<proteinExistence type="evidence at protein level"/>
<gene>
    <name evidence="21" type="primary">pduA</name>
    <name type="ordered locus">STM2038</name>
</gene>
<dbReference type="EMBL" id="AF026270">
    <property type="protein sequence ID" value="AAB84107.2"/>
    <property type="molecule type" value="Genomic_DNA"/>
</dbReference>
<dbReference type="EMBL" id="AE006468">
    <property type="protein sequence ID" value="AAL20942.1"/>
    <property type="molecule type" value="Genomic_DNA"/>
</dbReference>
<dbReference type="RefSeq" id="NP_460983.1">
    <property type="nucleotide sequence ID" value="NC_003197.2"/>
</dbReference>
<dbReference type="RefSeq" id="WP_001183618.1">
    <property type="nucleotide sequence ID" value="NC_003197.2"/>
</dbReference>
<dbReference type="PDB" id="3NGK">
    <property type="method" value="X-ray"/>
    <property type="resolution" value="2.26 A"/>
    <property type="chains" value="A=2-94"/>
</dbReference>
<dbReference type="PDB" id="4PPD">
    <property type="method" value="X-ray"/>
    <property type="resolution" value="2.40 A"/>
    <property type="chains" value="A/B/C/D/E/F/G=2-94"/>
</dbReference>
<dbReference type="PDB" id="4QIE">
    <property type="method" value="X-ray"/>
    <property type="resolution" value="2.35 A"/>
    <property type="chains" value="A/B/C/D/E/F/G/H/I=2-94"/>
</dbReference>
<dbReference type="PDB" id="4QIF">
    <property type="method" value="X-ray"/>
    <property type="resolution" value="2.00 A"/>
    <property type="chains" value="A/B/C/D/E/F/G/H/I=2-94"/>
</dbReference>
<dbReference type="PDB" id="4QIG">
    <property type="method" value="X-ray"/>
    <property type="resolution" value="3.30 A"/>
    <property type="chains" value="A/B/C/D/E/F/G=2-94"/>
</dbReference>
<dbReference type="PDB" id="4RBT">
    <property type="method" value="X-ray"/>
    <property type="resolution" value="2.30 A"/>
    <property type="chains" value="A/B/C=2-94"/>
</dbReference>
<dbReference type="PDB" id="4RBU">
    <property type="method" value="X-ray"/>
    <property type="resolution" value="2.79 A"/>
    <property type="chains" value="A/B/C/D/E/F/G/H/I=2-94"/>
</dbReference>
<dbReference type="PDB" id="4RBV">
    <property type="method" value="X-ray"/>
    <property type="resolution" value="3.10 A"/>
    <property type="chains" value="A/B/C/D/E/F/G=2-94"/>
</dbReference>
<dbReference type="PDBsum" id="3NGK"/>
<dbReference type="PDBsum" id="4PPD"/>
<dbReference type="PDBsum" id="4QIE"/>
<dbReference type="PDBsum" id="4QIF"/>
<dbReference type="PDBsum" id="4QIG"/>
<dbReference type="PDBsum" id="4RBT"/>
<dbReference type="PDBsum" id="4RBU"/>
<dbReference type="PDBsum" id="4RBV"/>
<dbReference type="SMR" id="P0A1C7"/>
<dbReference type="STRING" id="99287.STM2038"/>
<dbReference type="TCDB" id="1.S.1.1.1">
    <property type="family name" value="the bacterial microcompartment shell/pore-forming protein-1 (bmc-sp1) family"/>
</dbReference>
<dbReference type="PaxDb" id="99287-STM2038"/>
<dbReference type="GeneID" id="1253559"/>
<dbReference type="GeneID" id="97393755"/>
<dbReference type="KEGG" id="stm:STM2038"/>
<dbReference type="PATRIC" id="fig|99287.12.peg.2160"/>
<dbReference type="HOGENOM" id="CLU_064903_5_3_6"/>
<dbReference type="OMA" id="HSEVEMI"/>
<dbReference type="PhylomeDB" id="P0A1C7"/>
<dbReference type="BioCyc" id="SENT99287:STM2038-MONOMER"/>
<dbReference type="UniPathway" id="UPA00621"/>
<dbReference type="EvolutionaryTrace" id="P0A1C7"/>
<dbReference type="Proteomes" id="UP000001014">
    <property type="component" value="Chromosome"/>
</dbReference>
<dbReference type="GO" id="GO:0031472">
    <property type="term" value="C:propanediol degradation polyhedral organelle"/>
    <property type="evidence" value="ECO:0000314"/>
    <property type="project" value="UniProtKB"/>
</dbReference>
<dbReference type="GO" id="GO:0051144">
    <property type="term" value="P:propanediol catabolic process"/>
    <property type="evidence" value="ECO:0007669"/>
    <property type="project" value="UniProtKB-UniPathway"/>
</dbReference>
<dbReference type="CDD" id="cd07045">
    <property type="entry name" value="BMC_CcmK_like"/>
    <property type="match status" value="1"/>
</dbReference>
<dbReference type="Gene3D" id="3.30.70.1710">
    <property type="match status" value="1"/>
</dbReference>
<dbReference type="InterPro" id="IPR020808">
    <property type="entry name" value="Bact_microcomp_CS"/>
</dbReference>
<dbReference type="InterPro" id="IPR000249">
    <property type="entry name" value="BMC_dom"/>
</dbReference>
<dbReference type="InterPro" id="IPR050575">
    <property type="entry name" value="BMC_shell"/>
</dbReference>
<dbReference type="InterPro" id="IPR037233">
    <property type="entry name" value="CcmK-like_sf"/>
</dbReference>
<dbReference type="InterPro" id="IPR044872">
    <property type="entry name" value="CcmK/CsoS1_BMC"/>
</dbReference>
<dbReference type="PANTHER" id="PTHR33941:SF11">
    <property type="entry name" value="BACTERIAL MICROCOMPARTMENT SHELL PROTEIN PDUJ"/>
    <property type="match status" value="1"/>
</dbReference>
<dbReference type="PANTHER" id="PTHR33941">
    <property type="entry name" value="PROPANEDIOL UTILIZATION PROTEIN PDUA"/>
    <property type="match status" value="1"/>
</dbReference>
<dbReference type="Pfam" id="PF00936">
    <property type="entry name" value="BMC"/>
    <property type="match status" value="1"/>
</dbReference>
<dbReference type="SMART" id="SM00877">
    <property type="entry name" value="BMC"/>
    <property type="match status" value="1"/>
</dbReference>
<dbReference type="SUPFAM" id="SSF143414">
    <property type="entry name" value="CcmK-like"/>
    <property type="match status" value="1"/>
</dbReference>
<dbReference type="PROSITE" id="PS01139">
    <property type="entry name" value="BMC_1"/>
    <property type="match status" value="1"/>
</dbReference>
<dbReference type="PROSITE" id="PS51930">
    <property type="entry name" value="BMC_2"/>
    <property type="match status" value="1"/>
</dbReference>
<organism>
    <name type="scientific">Salmonella typhimurium (strain LT2 / SGSC1412 / ATCC 700720)</name>
    <dbReference type="NCBI Taxonomy" id="99287"/>
    <lineage>
        <taxon>Bacteria</taxon>
        <taxon>Pseudomonadati</taxon>
        <taxon>Pseudomonadota</taxon>
        <taxon>Gammaproteobacteria</taxon>
        <taxon>Enterobacterales</taxon>
        <taxon>Enterobacteriaceae</taxon>
        <taxon>Salmonella</taxon>
    </lineage>
</organism>
<reference key="1">
    <citation type="journal article" date="1994" name="J. Bacteriol.">
        <title>The control region of the pdu/cob regulon in Salmonella typhimurium.</title>
        <authorList>
            <person name="Chen P."/>
            <person name="Anderson D.I."/>
            <person name="Roth J.R."/>
        </authorList>
    </citation>
    <scope>NUCLEOTIDE SEQUENCE [GENOMIC DNA]</scope>
    <source>
        <strain>LT2</strain>
    </source>
</reference>
<reference key="2">
    <citation type="journal article" date="1997" name="J. Bacteriol.">
        <title>Propanediol utilization genes (pdu) of Salmonella typhimurium: three genes for the propanediol dehydratase.</title>
        <authorList>
            <person name="Bobik T.A."/>
            <person name="Xu Y."/>
            <person name="Jeter R.M."/>
            <person name="Otto K.E."/>
            <person name="Roth J.R."/>
        </authorList>
    </citation>
    <scope>NUCLEOTIDE SEQUENCE [GENOMIC DNA]</scope>
    <source>
        <strain>LT2</strain>
    </source>
</reference>
<reference key="3">
    <citation type="journal article" date="2001" name="Nature">
        <title>Complete genome sequence of Salmonella enterica serovar Typhimurium LT2.</title>
        <authorList>
            <person name="McClelland M."/>
            <person name="Sanderson K.E."/>
            <person name="Spieth J."/>
            <person name="Clifton S.W."/>
            <person name="Latreille P."/>
            <person name="Courtney L."/>
            <person name="Porwollik S."/>
            <person name="Ali J."/>
            <person name="Dante M."/>
            <person name="Du F."/>
            <person name="Hou S."/>
            <person name="Layman D."/>
            <person name="Leonard S."/>
            <person name="Nguyen C."/>
            <person name="Scott K."/>
            <person name="Holmes A."/>
            <person name="Grewal N."/>
            <person name="Mulvaney E."/>
            <person name="Ryan E."/>
            <person name="Sun H."/>
            <person name="Florea L."/>
            <person name="Miller W."/>
            <person name="Stoneking T."/>
            <person name="Nhan M."/>
            <person name="Waterston R."/>
            <person name="Wilson R.K."/>
        </authorList>
    </citation>
    <scope>NUCLEOTIDE SEQUENCE [LARGE SCALE GENOMIC DNA]</scope>
    <source>
        <strain>LT2 / SGSC1412 / ATCC 700720</strain>
    </source>
</reference>
<reference key="4">
    <citation type="journal article" date="1999" name="J. Bacteriol.">
        <title>The propanediol utilization (pdu) operon of Salmonella enterica serovar typhimurium LT2 includes genes necessary for formation of polyhedral organelles involved in coenzyme B(12)-dependent 1, 2-propanediol degradation.</title>
        <authorList>
            <person name="Bobik T.A."/>
            <person name="Havemann G.D."/>
            <person name="Busch R.J."/>
            <person name="Williams D.S."/>
            <person name="Aldrich H.C."/>
        </authorList>
    </citation>
    <scope>NUCLEOTIDE SEQUENCE [GENOMIC DNA]</scope>
    <scope>PATHWAY</scope>
    <scope>SEQUENCE REVISION TO C-TERMINUS</scope>
    <scope>INDUCTION</scope>
    <source>
        <strain>LT2</strain>
    </source>
</reference>
<reference key="5">
    <citation type="journal article" date="2003" name="J. Bacteriol.">
        <title>Protein content of polyhedral organelles involved in coenzyme B12-dependent degradation of 1,2-propanediol in Salmonella enterica serovar Typhimurium LT2.</title>
        <authorList>
            <person name="Havemann G.D."/>
            <person name="Bobik T.A."/>
        </authorList>
    </citation>
    <scope>PROTEIN SEQUENCE OF 1-7</scope>
    <scope>FUNCTION</scope>
    <scope>SUBCELLULAR LOCATION</scope>
    <source>
        <strain>LT2</strain>
    </source>
</reference>
<reference key="6">
    <citation type="journal article" date="2002" name="J. Bacteriol.">
        <title>PduA is a shell protein of polyhedral organelles involved in coenzyme B(12)-dependent degradation of 1,2-propanediol in Salmonella enterica serovar typhimurium LT2.</title>
        <authorList>
            <person name="Havemann G.D."/>
            <person name="Sampson E.M."/>
            <person name="Bobik T.A."/>
        </authorList>
    </citation>
    <scope>FUNCTION</scope>
    <scope>SUBCELLULAR LOCATION</scope>
    <scope>DISRUPTION PHENOTYPE</scope>
    <source>
        <strain>LT2</strain>
    </source>
</reference>
<reference key="7">
    <citation type="journal article" date="2008" name="J. Bacteriol.">
        <title>Microcompartments for B12-dependent 1,2-propanediol degradation provide protection from DNA and cellular damage by a reactive metabolic intermediate.</title>
        <authorList>
            <person name="Sampson E.M."/>
            <person name="Bobik T.A."/>
        </authorList>
    </citation>
    <scope>FUNCTION</scope>
    <scope>DISRUPTION PHENOTYPE</scope>
    <source>
        <strain>LT2</strain>
    </source>
</reference>
<reference key="8">
    <citation type="journal article" date="2011" name="J. Bacteriol.">
        <title>Genetic analysis of the protein shell of the microcompartments involved in coenzyme B12-dependent 1,2-propanediol degradation by Salmonella.</title>
        <authorList>
            <person name="Cheng S."/>
            <person name="Sinha S."/>
            <person name="Fan C."/>
            <person name="Liu Y."/>
            <person name="Bobik T.A."/>
        </authorList>
    </citation>
    <scope>FUNCTION</scope>
    <scope>DISRUPTION PHENOTYPE</scope>
    <source>
        <strain>LT2</strain>
    </source>
</reference>
<reference key="9">
    <citation type="journal article" date="2012" name="Proc. Natl. Acad. Sci. U.S.A.">
        <title>Interactions between the termini of lumen enzymes and shell proteins mediate enzyme encapsulation into bacterial microcompartments.</title>
        <authorList>
            <person name="Fan C."/>
            <person name="Cheng S."/>
            <person name="Sinha S."/>
            <person name="Bobik T.A."/>
        </authorList>
    </citation>
    <scope>FUNCTION</scope>
    <scope>INTERACTION WITH PDUP</scope>
    <scope>DOMAIN</scope>
    <scope>MUTAGENESIS OF 81-HIS--SER-93; HIS-81; VAL-84 AND LEU-88</scope>
    <source>
        <strain>LT2</strain>
    </source>
</reference>
<reference key="10">
    <citation type="journal article" date="2013" name="Microbiology">
        <title>A synthetic system for expression of components of a bacterial microcompartment.</title>
        <authorList>
            <person name="Sargent F."/>
            <person name="Davidson F.A."/>
            <person name="Kelly C.L."/>
            <person name="Binny R."/>
            <person name="Christodoulides N."/>
            <person name="Gibson D."/>
            <person name="Johansson E."/>
            <person name="Kozyrska K."/>
            <person name="Lado L.L."/>
            <person name="MacCallum J."/>
            <person name="Montague R."/>
            <person name="Ortmann B."/>
            <person name="Owen R."/>
            <person name="Coulthurst S.J."/>
            <person name="Dupuy L."/>
            <person name="Prescott A.R."/>
            <person name="Palmer T."/>
        </authorList>
    </citation>
    <scope>BIOTECHNOLOGY (ARTIFICIAL BMCS)</scope>
    <source>
        <strain>LT2</strain>
    </source>
</reference>
<reference key="11">
    <citation type="journal article" date="2015" name="PLoS Comput. Biol.">
        <title>Exploring bacterial organelle interactomes: a model of the protein-protein interaction network in the Pdu microcompartment.</title>
        <authorList>
            <person name="Jorda J."/>
            <person name="Liu Y."/>
            <person name="Bobik T.A."/>
            <person name="Yeates T.O."/>
        </authorList>
    </citation>
    <scope>MODELING OF BMCS</scope>
    <scope>FUNCTION</scope>
    <scope>SUBUNIT</scope>
    <scope>SUBCELLULAR LOCATION</scope>
</reference>
<reference key="12">
    <citation type="journal article" date="2015" name="J. Biol. Chem.">
        <title>Localization of proteins to the 1,2-propanediol utilization microcompartment by non-native signal sequences is mediated by a common hydrophobic motif.</title>
        <authorList>
            <person name="Jakobson C.M."/>
            <person name="Kim E.Y."/>
            <person name="Slininger M.F."/>
            <person name="Chien A."/>
            <person name="Tullman-Ercek D."/>
        </authorList>
    </citation>
    <scope>FUNCTION</scope>
    <scope>INDUCTION</scope>
    <source>
        <strain>LT2</strain>
    </source>
</reference>
<reference key="13">
    <citation type="journal article" date="2016" name="Sci. Rep.">
        <title>Engineering formation of multiple recombinant Eut protein nanocompartments in E. coli.</title>
        <authorList>
            <person name="Held M."/>
            <person name="Kolb A."/>
            <person name="Perdue S."/>
            <person name="Hsu S.Y."/>
            <person name="Bloch S.E."/>
            <person name="Quin M.B."/>
            <person name="Schmidt-Dannert C."/>
        </authorList>
    </citation>
    <scope>SUBCELLULAR LOCATION</scope>
    <source>
        <strain>LT2</strain>
    </source>
</reference>
<reference key="14">
    <citation type="journal article" date="2016" name="Mol. Microbiol.">
        <title>The function of the PduJ microcompartment shell protein is determined by the genomic position of its encoding gene.</title>
        <authorList>
            <person name="Chowdhury C."/>
            <person name="Chun S."/>
            <person name="Sawaya M.R."/>
            <person name="Yeates T.O."/>
            <person name="Bobik T.A."/>
        </authorList>
    </citation>
    <scope>FUNCTION</scope>
    <scope>DISRUPTION PHENOTYPE</scope>
    <scope>MUTAGENESIS OF SER-40</scope>
    <source>
        <strain>LT2</strain>
    </source>
</reference>
<reference key="15">
    <citation type="journal article" date="2017" name="ACS Synth. Biol.">
        <title>Evidence for Improved Encapsulated Pathway Behavior in a Bacterial Microcompartment through Shell Protein Engineering.</title>
        <authorList>
            <person name="Slininger Lee M.F."/>
            <person name="Jakobson C.M."/>
            <person name="Tullman-Ercek D."/>
        </authorList>
    </citation>
    <scope>FUNCTION</scope>
    <scope>SUBCELLULAR LOCATION</scope>
    <scope>DISRUPTION PHENOTYPE</scope>
    <scope>MUTAGENESIS OF LYS-26 AND LYS-37</scope>
    <source>
        <strain>LT2</strain>
    </source>
</reference>
<reference key="16">
    <citation type="journal article" date="2017" name="J. Phys. Chem. B">
        <title>Molecular Dynamics Simulations of Selective Metabolite Transport across the Propanediol Bacterial Microcompartment Shell.</title>
        <authorList>
            <person name="Park J."/>
            <person name="Chun S."/>
            <person name="Bobik T.A."/>
            <person name="Houk K.N."/>
            <person name="Yeates T.O."/>
        </authorList>
    </citation>
    <scope>FUNCTION IN METABOLITE DIFFUSION</scope>
    <source>
        <strain>LT2</strain>
    </source>
</reference>
<reference key="17">
    <citation type="journal article" date="2017" name="PLoS Comput. Biol.">
        <title>A systems-level model reveals that 1,2-Propanediol utilization microcompartments enhance pathway flux through intermediate sequestration.</title>
        <authorList>
            <person name="Jakobson C.M."/>
            <person name="Tullman-Ercek D."/>
            <person name="Slininger M.F."/>
            <person name="Mangan N.M."/>
        </authorList>
    </citation>
    <scope>SYSTEM-MODELING</scope>
    <scope>FUNCTION</scope>
    <source>
        <strain>LT2</strain>
    </source>
</reference>
<reference key="18">
    <citation type="journal article" date="2020" name="J. Mater. Chem. B">
        <title>Functional protein shells fabricated from the self-assembling protein sheets of prokaryotic organelles.</title>
        <authorList>
            <person name="Bari N.K."/>
            <person name="Kumar G."/>
            <person name="Hazra J.P."/>
            <person name="Kaur S."/>
            <person name="Sinha S."/>
        </authorList>
    </citation>
    <scope>BIOTECHNOLOGY (FORMING PROTEIN SHELLS)</scope>
    <scope>MUTAGENESIS OF LYS-26</scope>
    <source>
        <strain>LT2</strain>
    </source>
</reference>
<reference key="19">
    <citation type="journal article" date="2021" name="J. Mol. Biol.">
        <title>Self-assembling Shell Proteins PduA and PduJ have Essential and Redundant Roles in Bacterial Microcompartment Assembly.</title>
        <authorList>
            <person name="Kennedy N.W."/>
            <person name="Ikonomova S.P."/>
            <person name="Slininger Lee M."/>
            <person name="Raeder H.W."/>
            <person name="Tullman-Ercek D."/>
        </authorList>
    </citation>
    <scope>FUNCTION</scope>
    <scope>DISRUPTION PHENOTYPE</scope>
    <scope>MUTAGENESIS OF LYS-26</scope>
    <source>
        <strain>LT2</strain>
    </source>
</reference>
<reference evidence="31" key="20">
    <citation type="journal article" date="2010" name="J. Biol. Chem.">
        <title>Structural insight into the mechanisms of transport across the Salmonella enterica Pdu microcompartment shell.</title>
        <authorList>
            <person name="Crowley C.S."/>
            <person name="Cascio D."/>
            <person name="Sawaya M.R."/>
            <person name="Kopstein J.S."/>
            <person name="Bobik T.A."/>
            <person name="Yeates T.O."/>
        </authorList>
    </citation>
    <scope>X-RAY CRYSTALLOGRAPHY (2.26 ANGSTROMS) OF 2-94</scope>
    <scope>FUNCTION</scope>
    <scope>SUBUNIT</scope>
    <source>
        <strain>LT2</strain>
    </source>
</reference>
<reference evidence="32" key="21">
    <citation type="journal article" date="2014" name="J. Mol. Biol.">
        <title>Alanine scanning mutagenesis identifies an asparagine-arginine-lysine triad essential to assembly of the shell of the Pdu microcompartment.</title>
        <authorList>
            <person name="Sinha S."/>
            <person name="Cheng S."/>
            <person name="Sung Y.W."/>
            <person name="McNamara D.E."/>
            <person name="Sawaya M.R."/>
            <person name="Yeates T.O."/>
            <person name="Bobik T.A."/>
        </authorList>
    </citation>
    <scope>X-RAY CRYSTALLOGRAPHY (2.40 ANGSTROMS) OF 2-94</scope>
    <scope>FUNCTION</scope>
    <scope>SUBUNIT</scope>
    <scope>SUBCELLULAR LOCATION</scope>
    <scope>MUTAGENESIS OF LYS-26; ASN-29; LYS-37; LYS-55 AND ARG-79</scope>
    <source>
        <strain>LT2</strain>
    </source>
</reference>
<reference evidence="33" key="22">
    <citation type="submission" date="2014-05" db="PDB data bank">
        <title>Crystal Structure of PduA with edge mutation K26D.</title>
        <authorList>
            <person name="Pang A.H."/>
            <person name="Sawaya M.R."/>
            <person name="Bobik T.A."/>
            <person name="Yeates T.O."/>
        </authorList>
    </citation>
    <scope>X-RAY CRYSTALLOGRAPHY (2.35 ANGSTROMS) OF 2-94</scope>
    <scope>SUBUNIT</scope>
</reference>
<reference evidence="34 35 36 37 38" key="23">
    <citation type="journal article" date="2015" name="Proc. Natl. Acad. Sci. U.S.A.">
        <title>Selective molecular transport through the protein shell of a bacterial microcompartment organelle.</title>
        <authorList>
            <person name="Chowdhury C."/>
            <person name="Chun S."/>
            <person name="Pang A."/>
            <person name="Sawaya M.R."/>
            <person name="Sinha S."/>
            <person name="Yeates T.O."/>
            <person name="Bobik T.A."/>
        </authorList>
    </citation>
    <scope>X-RAY CRYSTALLOGRAPHY (2.00 ANGSTROMS) OF 2-94</scope>
    <scope>FUNCTION</scope>
    <scope>SUBUNIT</scope>
    <scope>SUBCELLULAR LOCATION</scope>
    <scope>MUTAGENESIS OF SER-40</scope>
    <source>
        <strain>LT2</strain>
    </source>
</reference>
<name>PDUA_SALTY</name>
<feature type="chain" id="PRO_0000201511" description="Bacterial microcompartment shell protein PduA">
    <location>
        <begin position="1"/>
        <end position="94"/>
    </location>
</feature>
<feature type="domain" description="BMC" evidence="1">
    <location>
        <begin position="5"/>
        <end position="89"/>
    </location>
</feature>
<feature type="mutagenesis site" description="No BMCs are made, forms hexamers which do not form arrays, dominant to wild-type protein. Little to no growth on 1,2-PD, cells elongate and are joined by filaments, BMC proteins aggregate near poles. No longer forms filaments upon overexpression, does not restore BMC formation to a double pduA-pduJ deletion. Does not form closed shells." evidence="10 15 16 17">
    <original>K</original>
    <variation>A</variation>
    <location>
        <position position="26"/>
    </location>
</feature>
<feature type="mutagenesis site" description="Subject to propionaldehyde toxicity, makes about 75% BMCs, shells are wrinkled and leaky." evidence="10">
    <original>N</original>
    <variation>A</variation>
    <location>
        <position position="29"/>
    </location>
</feature>
<feature type="mutagenesis site" description="Slow growth at limiting vitamin B12, wild-type at saturating conditions." evidence="10">
    <original>K</original>
    <variation>A</variation>
    <location>
        <position position="37"/>
    </location>
</feature>
<feature type="mutagenesis site" description="Improved growth on 1,2-PD, makes slightly larger BMCs, alters accumulation of PD metabolites." evidence="15">
    <original>K</original>
    <variation>Q</variation>
    <location>
        <position position="37"/>
    </location>
</feature>
<feature type="mutagenesis site" description="No change in shell permeability to PD, excretes more propionaldehyde, wild-type growth on 1,2-PD." evidence="11">
    <original>S</original>
    <variation>A</variation>
    <location>
        <position position="40"/>
    </location>
</feature>
<feature type="mutagenesis site" description="Crystallized, central pore can be open or occluded, less permeable to substrate, cells grow slowly on 1,2-PD." evidence="11">
    <original>S</original>
    <variation>C</variation>
    <location>
        <position position="40"/>
    </location>
</feature>
<feature type="mutagenesis site" description="Crystallized, central pore is occluded, less permeable to PD, 62% DDH activity, cells grow slowly on 1,2-PD." evidence="11">
    <original>S</original>
    <variation>GSG</variation>
    <location>
        <position position="40"/>
    </location>
</feature>
<feature type="mutagenesis site" description="Crystallized, central pore is less symmetric, no change in shell permeability, increased permeability to glycerol, wild-type growth on 1,2-PD." evidence="11">
    <original>S</original>
    <variation>H</variation>
    <location>
        <position position="40"/>
    </location>
</feature>
<feature type="mutagenesis site" description="Crystallized, central pore is more hydrophobic but same size, less permeable to PD, 50% DDH activity, cells grow slowly on 1,2-PD." evidence="11 14">
    <original>S</original>
    <variation>L</variation>
    <location>
        <position position="40"/>
    </location>
</feature>
<feature type="mutagenesis site" description="No change in shell permeability, wild-type growth on 1,2-PD." evidence="11">
    <original>S</original>
    <variation>M</variation>
    <location>
        <position position="40"/>
    </location>
</feature>
<feature type="mutagenesis site" description="Crystallized, central pore is occluded, less permeable to substrate, 75% DDH activity, cells grow slowly on 1,2-PD." evidence="11">
    <original>S</original>
    <variation>Q</variation>
    <location>
        <position position="40"/>
    </location>
</feature>
<feature type="mutagenesis site" description="No change in shell permeability, wild-type growth on 1,2-PD." evidence="11">
    <original>S</original>
    <variation>T</variation>
    <location>
        <position position="40"/>
    </location>
</feature>
<feature type="mutagenesis site" description="Slow growth at limiting vitamin B12, wild-type at saturating conditions." evidence="10">
    <original>K</original>
    <variation>A</variation>
    <location>
        <position position="55"/>
    </location>
</feature>
<feature type="mutagenesis site" description="Subject to propionaldehyde toxicity, makes about 70% BMCs, protein shells appear wild-type but leak." evidence="10">
    <original>R</original>
    <variation>A</variation>
    <location>
        <position position="79"/>
    </location>
</feature>
<feature type="mutagenesis site" description="No longer interacts with PduP." evidence="8">
    <location>
        <begin position="81"/>
        <end position="93"/>
    </location>
</feature>
<feature type="mutagenesis site" description="Decreased amounts of PduP in purified BMCs." evidence="8">
    <original>H</original>
    <variation>A</variation>
    <location>
        <position position="81"/>
    </location>
</feature>
<feature type="mutagenesis site" description="Decreased amounts of PduP in purified BMCs." evidence="8">
    <original>V</original>
    <variation>A</variation>
    <location>
        <position position="84"/>
    </location>
</feature>
<feature type="mutagenesis site" description="Decreased amounts of PduP in purified BMCs." evidence="8">
    <original>L</original>
    <variation>A</variation>
    <location>
        <position position="88"/>
    </location>
</feature>
<feature type="strand" evidence="39">
    <location>
        <begin position="4"/>
        <end position="13"/>
    </location>
</feature>
<feature type="helix" evidence="39">
    <location>
        <begin position="14"/>
        <end position="24"/>
    </location>
</feature>
<feature type="strand" evidence="39">
    <location>
        <begin position="30"/>
        <end position="39"/>
    </location>
</feature>
<feature type="strand" evidence="39">
    <location>
        <begin position="42"/>
        <end position="50"/>
    </location>
</feature>
<feature type="helix" evidence="39">
    <location>
        <begin position="51"/>
        <end position="66"/>
    </location>
</feature>
<feature type="strand" evidence="39">
    <location>
        <begin position="69"/>
        <end position="78"/>
    </location>
</feature>
<feature type="turn" evidence="39">
    <location>
        <begin position="82"/>
        <end position="87"/>
    </location>
</feature>
<sequence>MQQEALGMVETKGLTAAIEAADAMVKSANVMLVGYEKIGSGLVTVIVRGDVGAVKAATDAGAAAARNVGEVKAVHVIPRPHTDVEKILPKGISQ</sequence>
<protein>
    <recommendedName>
        <fullName evidence="19">Bacterial microcompartment shell protein PduA</fullName>
    </recommendedName>
    <alternativeName>
        <fullName evidence="22">Bacterial microcompartment protein homohexamer</fullName>
        <shortName evidence="20">BMC-H</shortName>
    </alternativeName>
    <alternativeName>
        <fullName>Propanediol utilization protein PduA</fullName>
    </alternativeName>
</protein>
<comment type="function">
    <text evidence="3 4 7 8 10 11 14 15 17 24 26 27 28 30">One of the major shell proteins of the bacterial microcompartment (BMC) dedicated to 1,2-propanediol (1,2-PD) degradation (Probable) (PubMed:11844753, PubMed:21239588). At least one of PduA or PduJ is required for BMC assembly; it must be encoded as the first gene in the pdu operon (PubMed:27561553, PubMed:33227310). Not required for structural integrity of BMCs, it is required to mitigate propionaldehyde toxicity (PubMed:21239588). Controls diffusion of 1,2-PD into and propionaldehyde out of the BMC shell; residue 40 is particularly important for pore permeability (Probable) (PubMed:25713376, PubMed:27561553, PubMed:28585808). Overexpression of this protein leads to aberrant filaments that extend the length of the cell, cross the cleavage furrow and impair division. The filaments form nanotubes with a hollow center (PubMed:11844753, PubMed:33227310). The isolated BMC shell component protein ratio for J:A:B':B:K:T:U is approximately 15:10:7:6:1:1:2 (PubMed:12923081). Edge residues (particularly Lys-26) are important for function and assembly of the BMC, and influence array formation by hexamers (PubMed:24747050). Interaction with PduA allows encapsulation of at least PduP in BMCs (PubMed:22927404). Probably also targets PduD to the BMC (Probable). PduA is probably the hub for binding multiple enzymes to the interior of the BMC; modeling suggests PduC, PduD, PduE, PduG, PduL and PduP are targeted to PduA (Probable).</text>
</comment>
<comment type="function">
    <text evidence="5 11 29">The 1,2-PD-specific bacterial microcompartment (BMC) concentrates low levels of 1,2-PD catabolic enzymes, concentrates volatile reaction intermediates thus enhancing pathway flux and keeps the level of toxic, mutagenic propionaldehyde low.</text>
</comment>
<comment type="pathway">
    <text evidence="23">Polyol metabolism; 1,2-propanediol degradation.</text>
</comment>
<comment type="subunit">
    <text evidence="6 8 10 11 18 27">Homohexamer with a central pore of about 5.6 Angstroms in diameter. The hexamers pack against each other in arrays (PubMed:20870711, PubMed:24747050, PubMed:25713376, Ref.22). Interacts with the N-terminus of PduP which targets PduP to the BMC (PubMed:22927404). Modeling suggests PduC, PduD, PduE, PduL and PduP interact with a cleft formed by the C-terminal segments of 2 adjacent PduA subunits (on the BMC luminal side) in the hexamer (Probable).</text>
</comment>
<comment type="subcellular location">
    <subcellularLocation>
        <location evidence="3 4 10 11 13 15">Bacterial microcompartment</location>
    </subcellularLocation>
    <text evidence="25 27">The C-terminus probably faces the interior of the BMC (Probable). Modeling suggests the concave face (with both termini) is in the interior of the BMC (Probable).</text>
</comment>
<comment type="induction">
    <text evidence="2 12">The first gene in the pdu operon. BMC production is induced by growth on 1,2-PD vitamin B12 medium (PubMed:10498708, PubMed:26283792). No change when grown in the presence of 1,2-PD, ethanolamine and vitamin B12, suggesting it is possible for both the eut and pdu operons to be expressed at the same time (PubMed:26283792).</text>
</comment>
<comment type="domain">
    <text evidence="8">The C-terminal 14 residues mediate binding to the N-terminus of PduP, which encapsulates PduP into BMCs.</text>
</comment>
<comment type="disruption phenotype">
    <text evidence="3 5 7 14 15 17">Cells do not make BMCs, diol dehydratase is found in diffuse aggregates near the cell pole; it was later found this a double pduA-pduBB' deletion (PubMed:11844753). A single deletion forms larger than normal BMCs; it is not fully complemented by protein produced from a plasmid (PubMed:21239588, PubMed:27561553). Grows in an interrupted manner on 1,2-PD and vitamin B12; grows for a while then stops, then restarts as toxic propionaldehyde accumulates and then decreases (PubMed:11844753, PubMed:18296526, PubMed:21239588, PubMed:28585808, PubMed:33227310). Increased DNA mutagenesis, showing propionaldehyde is a mutagen (PubMed:18296526). Makes slightly larger BMCs; this phenotype can be rescued by PduA, but PduJ encoded on a plasmid cannot rescue a PduA deletion. When pduJ is cloned in the chromosomal position of pduA it substantially rescues the pduA deletion (PubMed:27561553, PubMed:33227310). Single pduA deletion makes BMCs but a double pduA-pduJ deletion does not (PubMed:33227310).</text>
</comment>
<comment type="biotechnology">
    <text evidence="9">Artificial BMCs can be made in E.coli by expressing pduA-pduB/B'-pduT-pduU-pduN-pduJ-pduK (in this order). Enzymes can be targeted to the BMC, and appear to be encapsulated within it.</text>
</comment>
<comment type="biotechnology">
    <text evidence="16">Upon overexpression and mixing of purified sheets with 2-ethyl-1-hexanol, will form closed shells. Enzymes (tested with endogenous BMC enzyme DDH and the peroxidase activity of cytC) can be encapsulated in the shells; the enzyme is active in the shells. The shells are permeable to a variety of compounds, showing they could be used to make protein based synthetic bioreactors.</text>
</comment>
<comment type="miscellaneous">
    <text evidence="2 4">Bacterial microcompartments (BMC) 100-200 nm in cross section are formed during aerobic growth on minimal 1,2-PD-B12 or anaerobic growth on 1,2-PD-tetrathionate medium, but not during aerobic growth on glucose, anerobic growth on glucose or pyruvate-tetrathionate (PubMed:10498708). BMCs can constitute up to 10% of total cell protein (PubMed:12923081).</text>
</comment>
<comment type="similarity">
    <text evidence="1">Belongs to the bacterial microcompartments protein family.</text>
</comment>